<organism>
    <name type="scientific">Bifidobacterium longum (strain DJO10A)</name>
    <dbReference type="NCBI Taxonomy" id="205913"/>
    <lineage>
        <taxon>Bacteria</taxon>
        <taxon>Bacillati</taxon>
        <taxon>Actinomycetota</taxon>
        <taxon>Actinomycetes</taxon>
        <taxon>Bifidobacteriales</taxon>
        <taxon>Bifidobacteriaceae</taxon>
        <taxon>Bifidobacterium</taxon>
    </lineage>
</organism>
<feature type="chain" id="PRO_1000093425" description="Peptide chain release factor 1">
    <location>
        <begin position="1"/>
        <end position="362"/>
    </location>
</feature>
<feature type="modified residue" description="N5-methylglutamine" evidence="1">
    <location>
        <position position="240"/>
    </location>
</feature>
<comment type="function">
    <text evidence="1">Peptide chain release factor 1 directs the termination of translation in response to the peptide chain termination codons UAG and UAA.</text>
</comment>
<comment type="subcellular location">
    <subcellularLocation>
        <location evidence="1">Cytoplasm</location>
    </subcellularLocation>
</comment>
<comment type="PTM">
    <text evidence="1">Methylated by PrmC. Methylation increases the termination efficiency of RF1.</text>
</comment>
<comment type="similarity">
    <text evidence="1">Belongs to the prokaryotic/mitochondrial release factor family.</text>
</comment>
<keyword id="KW-0963">Cytoplasm</keyword>
<keyword id="KW-0488">Methylation</keyword>
<keyword id="KW-0648">Protein biosynthesis</keyword>
<protein>
    <recommendedName>
        <fullName evidence="1">Peptide chain release factor 1</fullName>
        <shortName evidence="1">RF-1</shortName>
    </recommendedName>
</protein>
<name>RF1_BIFLD</name>
<sequence length="362" mass="40112">MADEQFPAAATALEEYQSIEEQMASPEVVSNPDKLRKLGRRHAELGAIVDAYKAWLQVKDDLAAAQEMAGEDADFAEEAKRLEDELPGVEEKLRTALIPRDPDDARDTIMEIKAGTGGEEAALFAGDLLRMYTRYAEKRGWSVNVQSENTTELGGVKDVQIAIRAKGTPAPEDGVWASMKYEGGVHRVQRIPVTESQGRIQTSAAGVIVFPEADEDDDEIEIDPKDLKIDIFMSSGPGGQSVNTTYSAVRMTHLPTGITVNMQDEKSQIQNRAAALRVLKSRLLAMKHEQEAAEAADMRHSQVRSLDRSERIRTYNFPENRIVDHRTNYKAYNLDAVLDGDLQAVIDSDIQADEADRLANQK</sequence>
<proteinExistence type="inferred from homology"/>
<evidence type="ECO:0000255" key="1">
    <source>
        <dbReference type="HAMAP-Rule" id="MF_00093"/>
    </source>
</evidence>
<accession>B3DR51</accession>
<reference key="1">
    <citation type="journal article" date="2008" name="BMC Genomics">
        <title>Comparative genomic analysis of the gut bacterium Bifidobacterium longum reveals loci susceptible to deletion during pure culture growth.</title>
        <authorList>
            <person name="Lee J.H."/>
            <person name="Karamychev V.N."/>
            <person name="Kozyavkin S.A."/>
            <person name="Mills D."/>
            <person name="Pavlov A.R."/>
            <person name="Pavlova N.V."/>
            <person name="Polouchine N.N."/>
            <person name="Richardson P.M."/>
            <person name="Shakhova V.V."/>
            <person name="Slesarev A.I."/>
            <person name="Weimer B."/>
            <person name="O'Sullivan D.J."/>
        </authorList>
    </citation>
    <scope>NUCLEOTIDE SEQUENCE [LARGE SCALE GENOMIC DNA]</scope>
    <source>
        <strain>DJO10A</strain>
    </source>
</reference>
<gene>
    <name evidence="1" type="primary">prfA</name>
    <name type="ordered locus">BLD_1889</name>
</gene>
<dbReference type="EMBL" id="CP000605">
    <property type="protein sequence ID" value="ACD99334.1"/>
    <property type="molecule type" value="Genomic_DNA"/>
</dbReference>
<dbReference type="RefSeq" id="WP_010080980.1">
    <property type="nucleotide sequence ID" value="NZ_AABM02000004.1"/>
</dbReference>
<dbReference type="SMR" id="B3DR51"/>
<dbReference type="KEGG" id="blj:BLD_1889"/>
<dbReference type="HOGENOM" id="CLU_036856_0_1_11"/>
<dbReference type="Proteomes" id="UP000002419">
    <property type="component" value="Chromosome"/>
</dbReference>
<dbReference type="GO" id="GO:0005737">
    <property type="term" value="C:cytoplasm"/>
    <property type="evidence" value="ECO:0007669"/>
    <property type="project" value="UniProtKB-SubCell"/>
</dbReference>
<dbReference type="GO" id="GO:0016149">
    <property type="term" value="F:translation release factor activity, codon specific"/>
    <property type="evidence" value="ECO:0007669"/>
    <property type="project" value="UniProtKB-UniRule"/>
</dbReference>
<dbReference type="FunFam" id="3.30.160.20:FF:000004">
    <property type="entry name" value="Peptide chain release factor 1"/>
    <property type="match status" value="1"/>
</dbReference>
<dbReference type="Gene3D" id="3.30.160.20">
    <property type="match status" value="1"/>
</dbReference>
<dbReference type="Gene3D" id="3.30.70.1660">
    <property type="match status" value="1"/>
</dbReference>
<dbReference type="Gene3D" id="6.10.140.1950">
    <property type="match status" value="1"/>
</dbReference>
<dbReference type="HAMAP" id="MF_00093">
    <property type="entry name" value="Rel_fac_1"/>
    <property type="match status" value="1"/>
</dbReference>
<dbReference type="InterPro" id="IPR005139">
    <property type="entry name" value="PCRF"/>
</dbReference>
<dbReference type="InterPro" id="IPR000352">
    <property type="entry name" value="Pep_chain_release_fac_I"/>
</dbReference>
<dbReference type="InterPro" id="IPR045853">
    <property type="entry name" value="Pep_chain_release_fac_I_sf"/>
</dbReference>
<dbReference type="InterPro" id="IPR050057">
    <property type="entry name" value="Prokaryotic/Mito_RF"/>
</dbReference>
<dbReference type="InterPro" id="IPR004373">
    <property type="entry name" value="RF-1"/>
</dbReference>
<dbReference type="NCBIfam" id="TIGR00019">
    <property type="entry name" value="prfA"/>
    <property type="match status" value="1"/>
</dbReference>
<dbReference type="NCBIfam" id="NF001859">
    <property type="entry name" value="PRK00591.1"/>
    <property type="match status" value="1"/>
</dbReference>
<dbReference type="PANTHER" id="PTHR43804">
    <property type="entry name" value="LD18447P"/>
    <property type="match status" value="1"/>
</dbReference>
<dbReference type="PANTHER" id="PTHR43804:SF7">
    <property type="entry name" value="LD18447P"/>
    <property type="match status" value="1"/>
</dbReference>
<dbReference type="Pfam" id="PF03462">
    <property type="entry name" value="PCRF"/>
    <property type="match status" value="1"/>
</dbReference>
<dbReference type="Pfam" id="PF00472">
    <property type="entry name" value="RF-1"/>
    <property type="match status" value="1"/>
</dbReference>
<dbReference type="SMART" id="SM00937">
    <property type="entry name" value="PCRF"/>
    <property type="match status" value="1"/>
</dbReference>
<dbReference type="SUPFAM" id="SSF75620">
    <property type="entry name" value="Release factor"/>
    <property type="match status" value="1"/>
</dbReference>